<dbReference type="EC" id="2.1.1.192" evidence="1"/>
<dbReference type="EMBL" id="CP000133">
    <property type="protein sequence ID" value="ABC92675.1"/>
    <property type="status" value="ALT_INIT"/>
    <property type="molecule type" value="Genomic_DNA"/>
</dbReference>
<dbReference type="RefSeq" id="WP_042119079.1">
    <property type="nucleotide sequence ID" value="NC_007761.1"/>
</dbReference>
<dbReference type="SMR" id="Q2K3B1"/>
<dbReference type="KEGG" id="ret:RHE_CH03930"/>
<dbReference type="eggNOG" id="COG0820">
    <property type="taxonomic scope" value="Bacteria"/>
</dbReference>
<dbReference type="HOGENOM" id="CLU_029101_0_0_5"/>
<dbReference type="OrthoDB" id="9793973at2"/>
<dbReference type="Proteomes" id="UP000001936">
    <property type="component" value="Chromosome"/>
</dbReference>
<dbReference type="GO" id="GO:0005737">
    <property type="term" value="C:cytoplasm"/>
    <property type="evidence" value="ECO:0007669"/>
    <property type="project" value="UniProtKB-SubCell"/>
</dbReference>
<dbReference type="GO" id="GO:0051539">
    <property type="term" value="F:4 iron, 4 sulfur cluster binding"/>
    <property type="evidence" value="ECO:0007669"/>
    <property type="project" value="UniProtKB-UniRule"/>
</dbReference>
<dbReference type="GO" id="GO:0046872">
    <property type="term" value="F:metal ion binding"/>
    <property type="evidence" value="ECO:0007669"/>
    <property type="project" value="UniProtKB-KW"/>
</dbReference>
<dbReference type="GO" id="GO:0070040">
    <property type="term" value="F:rRNA (adenine(2503)-C2-)-methyltransferase activity"/>
    <property type="evidence" value="ECO:0007669"/>
    <property type="project" value="UniProtKB-UniRule"/>
</dbReference>
<dbReference type="GO" id="GO:0019843">
    <property type="term" value="F:rRNA binding"/>
    <property type="evidence" value="ECO:0007669"/>
    <property type="project" value="UniProtKB-UniRule"/>
</dbReference>
<dbReference type="GO" id="GO:0002935">
    <property type="term" value="F:tRNA (adenine(37)-C2)-methyltransferase activity"/>
    <property type="evidence" value="ECO:0007669"/>
    <property type="project" value="UniProtKB-UniRule"/>
</dbReference>
<dbReference type="GO" id="GO:0000049">
    <property type="term" value="F:tRNA binding"/>
    <property type="evidence" value="ECO:0007669"/>
    <property type="project" value="UniProtKB-UniRule"/>
</dbReference>
<dbReference type="GO" id="GO:0070475">
    <property type="term" value="P:rRNA base methylation"/>
    <property type="evidence" value="ECO:0007669"/>
    <property type="project" value="UniProtKB-UniRule"/>
</dbReference>
<dbReference type="GO" id="GO:0030488">
    <property type="term" value="P:tRNA methylation"/>
    <property type="evidence" value="ECO:0007669"/>
    <property type="project" value="UniProtKB-UniRule"/>
</dbReference>
<dbReference type="CDD" id="cd01335">
    <property type="entry name" value="Radical_SAM"/>
    <property type="match status" value="1"/>
</dbReference>
<dbReference type="FunFam" id="3.20.20.70:FF:000008">
    <property type="entry name" value="Dual-specificity RNA methyltransferase RlmN"/>
    <property type="match status" value="1"/>
</dbReference>
<dbReference type="Gene3D" id="1.10.150.530">
    <property type="match status" value="1"/>
</dbReference>
<dbReference type="Gene3D" id="3.20.20.70">
    <property type="entry name" value="Aldolase class I"/>
    <property type="match status" value="1"/>
</dbReference>
<dbReference type="HAMAP" id="MF_01849">
    <property type="entry name" value="RNA_methyltr_RlmN"/>
    <property type="match status" value="1"/>
</dbReference>
<dbReference type="InterPro" id="IPR013785">
    <property type="entry name" value="Aldolase_TIM"/>
</dbReference>
<dbReference type="InterPro" id="IPR040072">
    <property type="entry name" value="Methyltransferase_A"/>
</dbReference>
<dbReference type="InterPro" id="IPR048641">
    <property type="entry name" value="RlmN_N"/>
</dbReference>
<dbReference type="InterPro" id="IPR027492">
    <property type="entry name" value="RNA_MTrfase_RlmN"/>
</dbReference>
<dbReference type="InterPro" id="IPR004383">
    <property type="entry name" value="rRNA_lsu_MTrfase_RlmN/Cfr"/>
</dbReference>
<dbReference type="InterPro" id="IPR007197">
    <property type="entry name" value="rSAM"/>
</dbReference>
<dbReference type="NCBIfam" id="TIGR00048">
    <property type="entry name" value="rRNA_mod_RlmN"/>
    <property type="match status" value="1"/>
</dbReference>
<dbReference type="PANTHER" id="PTHR30544">
    <property type="entry name" value="23S RRNA METHYLTRANSFERASE"/>
    <property type="match status" value="1"/>
</dbReference>
<dbReference type="PANTHER" id="PTHR30544:SF5">
    <property type="entry name" value="RADICAL SAM CORE DOMAIN-CONTAINING PROTEIN"/>
    <property type="match status" value="1"/>
</dbReference>
<dbReference type="Pfam" id="PF04055">
    <property type="entry name" value="Radical_SAM"/>
    <property type="match status" value="1"/>
</dbReference>
<dbReference type="Pfam" id="PF21016">
    <property type="entry name" value="RlmN_N"/>
    <property type="match status" value="1"/>
</dbReference>
<dbReference type="PIRSF" id="PIRSF006004">
    <property type="entry name" value="CHP00048"/>
    <property type="match status" value="1"/>
</dbReference>
<dbReference type="SFLD" id="SFLDF00275">
    <property type="entry name" value="adenosine_C2_methyltransferase"/>
    <property type="match status" value="1"/>
</dbReference>
<dbReference type="SFLD" id="SFLDG01062">
    <property type="entry name" value="methyltransferase_(Class_A)"/>
    <property type="match status" value="1"/>
</dbReference>
<dbReference type="SUPFAM" id="SSF102114">
    <property type="entry name" value="Radical SAM enzymes"/>
    <property type="match status" value="1"/>
</dbReference>
<dbReference type="PROSITE" id="PS51918">
    <property type="entry name" value="RADICAL_SAM"/>
    <property type="match status" value="1"/>
</dbReference>
<feature type="chain" id="PRO_0000350357" description="Dual-specificity RNA methyltransferase RlmN">
    <location>
        <begin position="1"/>
        <end position="409"/>
    </location>
</feature>
<feature type="domain" description="Radical SAM core" evidence="2">
    <location>
        <begin position="127"/>
        <end position="376"/>
    </location>
</feature>
<feature type="active site" description="Proton acceptor" evidence="1">
    <location>
        <position position="121"/>
    </location>
</feature>
<feature type="active site" description="S-methylcysteine intermediate" evidence="1">
    <location>
        <position position="379"/>
    </location>
</feature>
<feature type="binding site" evidence="1">
    <location>
        <position position="141"/>
    </location>
    <ligand>
        <name>[4Fe-4S] cluster</name>
        <dbReference type="ChEBI" id="CHEBI:49883"/>
        <note>4Fe-4S-S-AdoMet</note>
    </ligand>
</feature>
<feature type="binding site" evidence="1">
    <location>
        <position position="145"/>
    </location>
    <ligand>
        <name>[4Fe-4S] cluster</name>
        <dbReference type="ChEBI" id="CHEBI:49883"/>
        <note>4Fe-4S-S-AdoMet</note>
    </ligand>
</feature>
<feature type="binding site" evidence="1">
    <location>
        <position position="148"/>
    </location>
    <ligand>
        <name>[4Fe-4S] cluster</name>
        <dbReference type="ChEBI" id="CHEBI:49883"/>
        <note>4Fe-4S-S-AdoMet</note>
    </ligand>
</feature>
<feature type="binding site" evidence="1">
    <location>
        <begin position="205"/>
        <end position="206"/>
    </location>
    <ligand>
        <name>S-adenosyl-L-methionine</name>
        <dbReference type="ChEBI" id="CHEBI:59789"/>
    </ligand>
</feature>
<feature type="binding site" evidence="1">
    <location>
        <position position="237"/>
    </location>
    <ligand>
        <name>S-adenosyl-L-methionine</name>
        <dbReference type="ChEBI" id="CHEBI:59789"/>
    </ligand>
</feature>
<feature type="binding site" evidence="1">
    <location>
        <begin position="259"/>
        <end position="261"/>
    </location>
    <ligand>
        <name>S-adenosyl-L-methionine</name>
        <dbReference type="ChEBI" id="CHEBI:59789"/>
    </ligand>
</feature>
<feature type="binding site" evidence="1">
    <location>
        <position position="336"/>
    </location>
    <ligand>
        <name>S-adenosyl-L-methionine</name>
        <dbReference type="ChEBI" id="CHEBI:59789"/>
    </ligand>
</feature>
<feature type="disulfide bond" description="(transient)" evidence="1">
    <location>
        <begin position="134"/>
        <end position="379"/>
    </location>
</feature>
<reference key="1">
    <citation type="journal article" date="2006" name="Proc. Natl. Acad. Sci. U.S.A.">
        <title>The partitioned Rhizobium etli genome: genetic and metabolic redundancy in seven interacting replicons.</title>
        <authorList>
            <person name="Gonzalez V."/>
            <person name="Santamaria R.I."/>
            <person name="Bustos P."/>
            <person name="Hernandez-Gonzalez I."/>
            <person name="Medrano-Soto A."/>
            <person name="Moreno-Hagelsieb G."/>
            <person name="Janga S.C."/>
            <person name="Ramirez M.A."/>
            <person name="Jimenez-Jacinto V."/>
            <person name="Collado-Vides J."/>
            <person name="Davila G."/>
        </authorList>
    </citation>
    <scope>NUCLEOTIDE SEQUENCE [LARGE SCALE GENOMIC DNA]</scope>
    <source>
        <strain>ATCC 51251 / DSM 11541 / JCM 21823 / NBRC 15573 / CFN 42</strain>
    </source>
</reference>
<accession>Q2K3B1</accession>
<keyword id="KW-0004">4Fe-4S</keyword>
<keyword id="KW-0963">Cytoplasm</keyword>
<keyword id="KW-1015">Disulfide bond</keyword>
<keyword id="KW-0408">Iron</keyword>
<keyword id="KW-0411">Iron-sulfur</keyword>
<keyword id="KW-0479">Metal-binding</keyword>
<keyword id="KW-0489">Methyltransferase</keyword>
<keyword id="KW-1185">Reference proteome</keyword>
<keyword id="KW-0698">rRNA processing</keyword>
<keyword id="KW-0949">S-adenosyl-L-methionine</keyword>
<keyword id="KW-0808">Transferase</keyword>
<keyword id="KW-0819">tRNA processing</keyword>
<gene>
    <name evidence="1" type="primary">rlmN</name>
    <name type="ordered locus">RHE_CH03930</name>
</gene>
<name>RLMN_RHIEC</name>
<comment type="function">
    <text evidence="1">Specifically methylates position 2 of adenine 2503 in 23S rRNA and position 2 of adenine 37 in tRNAs. m2A2503 modification seems to play a crucial role in the proofreading step occurring at the peptidyl transferase center and thus would serve to optimize ribosomal fidelity.</text>
</comment>
<comment type="catalytic activity">
    <reaction evidence="1">
        <text>adenosine(2503) in 23S rRNA + 2 reduced [2Fe-2S]-[ferredoxin] + 2 S-adenosyl-L-methionine = 2-methyladenosine(2503) in 23S rRNA + 5'-deoxyadenosine + L-methionine + 2 oxidized [2Fe-2S]-[ferredoxin] + S-adenosyl-L-homocysteine</text>
        <dbReference type="Rhea" id="RHEA:42916"/>
        <dbReference type="Rhea" id="RHEA-COMP:10000"/>
        <dbReference type="Rhea" id="RHEA-COMP:10001"/>
        <dbReference type="Rhea" id="RHEA-COMP:10152"/>
        <dbReference type="Rhea" id="RHEA-COMP:10282"/>
        <dbReference type="ChEBI" id="CHEBI:17319"/>
        <dbReference type="ChEBI" id="CHEBI:33737"/>
        <dbReference type="ChEBI" id="CHEBI:33738"/>
        <dbReference type="ChEBI" id="CHEBI:57844"/>
        <dbReference type="ChEBI" id="CHEBI:57856"/>
        <dbReference type="ChEBI" id="CHEBI:59789"/>
        <dbReference type="ChEBI" id="CHEBI:74411"/>
        <dbReference type="ChEBI" id="CHEBI:74497"/>
        <dbReference type="EC" id="2.1.1.192"/>
    </reaction>
</comment>
<comment type="catalytic activity">
    <reaction evidence="1">
        <text>adenosine(37) in tRNA + 2 reduced [2Fe-2S]-[ferredoxin] + 2 S-adenosyl-L-methionine = 2-methyladenosine(37) in tRNA + 5'-deoxyadenosine + L-methionine + 2 oxidized [2Fe-2S]-[ferredoxin] + S-adenosyl-L-homocysteine</text>
        <dbReference type="Rhea" id="RHEA:43332"/>
        <dbReference type="Rhea" id="RHEA-COMP:10000"/>
        <dbReference type="Rhea" id="RHEA-COMP:10001"/>
        <dbReference type="Rhea" id="RHEA-COMP:10162"/>
        <dbReference type="Rhea" id="RHEA-COMP:10485"/>
        <dbReference type="ChEBI" id="CHEBI:17319"/>
        <dbReference type="ChEBI" id="CHEBI:33737"/>
        <dbReference type="ChEBI" id="CHEBI:33738"/>
        <dbReference type="ChEBI" id="CHEBI:57844"/>
        <dbReference type="ChEBI" id="CHEBI:57856"/>
        <dbReference type="ChEBI" id="CHEBI:59789"/>
        <dbReference type="ChEBI" id="CHEBI:74411"/>
        <dbReference type="ChEBI" id="CHEBI:74497"/>
        <dbReference type="EC" id="2.1.1.192"/>
    </reaction>
</comment>
<comment type="cofactor">
    <cofactor evidence="1">
        <name>[4Fe-4S] cluster</name>
        <dbReference type="ChEBI" id="CHEBI:49883"/>
    </cofactor>
    <text evidence="1">Binds 1 [4Fe-4S] cluster. The cluster is coordinated with 3 cysteines and an exchangeable S-adenosyl-L-methionine.</text>
</comment>
<comment type="subcellular location">
    <subcellularLocation>
        <location evidence="1">Cytoplasm</location>
    </subcellularLocation>
</comment>
<comment type="miscellaneous">
    <text evidence="1">Reaction proceeds by a ping-pong mechanism involving intermediate methylation of a conserved cysteine residue.</text>
</comment>
<comment type="similarity">
    <text evidence="1">Belongs to the radical SAM superfamily. RlmN family.</text>
</comment>
<comment type="sequence caution" evidence="3">
    <conflict type="erroneous initiation">
        <sequence resource="EMBL-CDS" id="ABC92675"/>
    </conflict>
</comment>
<proteinExistence type="inferred from homology"/>
<protein>
    <recommendedName>
        <fullName evidence="1">Dual-specificity RNA methyltransferase RlmN</fullName>
        <ecNumber evidence="1">2.1.1.192</ecNumber>
    </recommendedName>
    <alternativeName>
        <fullName evidence="1">23S rRNA (adenine(2503)-C(2))-methyltransferase</fullName>
    </alternativeName>
    <alternativeName>
        <fullName evidence="1">23S rRNA m2A2503 methyltransferase</fullName>
    </alternativeName>
    <alternativeName>
        <fullName evidence="1">Ribosomal RNA large subunit methyltransferase N</fullName>
    </alternativeName>
    <alternativeName>
        <fullName evidence="1">tRNA (adenine(37)-C(2))-methyltransferase</fullName>
    </alternativeName>
    <alternativeName>
        <fullName evidence="1">tRNA m2A37 methyltransferase</fullName>
    </alternativeName>
</protein>
<sequence>MSVMDAIVVKKPQAARPSSGAEKPSLIGLSREEMAAALREKGVPEKQIKMRVSQLWNWIYVRGVSDFDHMTNVAKDMREMLKQHFTIARPEIVEEQVSNDGTRKWLLRFPARGAGRPVEIEAVYIPEEGRGTLCISSQVGCTLTCSFCHTGTQRLVRNLTAEEILSQLLLARDRLGDFPDREAPQGTIMPAEGRKVSNIVMMGMGEPLYNFDAVKQALLIATDGDGLSLSKRRVTLSTSGVVPEIFRTGEEIGVMLAISLHAVRDDLRDILVPINKKYPLKELIDACKAYPGLSNARRITFEYVMLKDVNDSLEDAKGLIKLLKGVPAKINLIPFNPWPGTNYQCSDWEQIEKFADFINSAGYASPIRTPRGRDILAACGQLKSESERMRKTERLAFEAMMIANHGADD</sequence>
<evidence type="ECO:0000255" key="1">
    <source>
        <dbReference type="HAMAP-Rule" id="MF_01849"/>
    </source>
</evidence>
<evidence type="ECO:0000255" key="2">
    <source>
        <dbReference type="PROSITE-ProRule" id="PRU01266"/>
    </source>
</evidence>
<evidence type="ECO:0000305" key="3"/>
<organism>
    <name type="scientific">Rhizobium etli (strain ATCC 51251 / DSM 11541 / JCM 21823 / NBRC 15573 / CFN 42)</name>
    <dbReference type="NCBI Taxonomy" id="347834"/>
    <lineage>
        <taxon>Bacteria</taxon>
        <taxon>Pseudomonadati</taxon>
        <taxon>Pseudomonadota</taxon>
        <taxon>Alphaproteobacteria</taxon>
        <taxon>Hyphomicrobiales</taxon>
        <taxon>Rhizobiaceae</taxon>
        <taxon>Rhizobium/Agrobacterium group</taxon>
        <taxon>Rhizobium</taxon>
    </lineage>
</organism>